<organism>
    <name type="scientific">Salmonella typhi</name>
    <dbReference type="NCBI Taxonomy" id="90370"/>
    <lineage>
        <taxon>Bacteria</taxon>
        <taxon>Pseudomonadati</taxon>
        <taxon>Pseudomonadota</taxon>
        <taxon>Gammaproteobacteria</taxon>
        <taxon>Enterobacterales</taxon>
        <taxon>Enterobacteriaceae</taxon>
        <taxon>Salmonella</taxon>
    </lineage>
</organism>
<comment type="function">
    <text evidence="1">Catalyzes the esterification, concomitant with transport, of exogenous long-chain fatty acids into metabolically active CoA thioesters for subsequent degradation or incorporation into phospholipids.</text>
</comment>
<comment type="catalytic activity">
    <reaction evidence="1">
        <text>a long-chain fatty acid + ATP + CoA = a long-chain fatty acyl-CoA + AMP + diphosphate</text>
        <dbReference type="Rhea" id="RHEA:15421"/>
        <dbReference type="ChEBI" id="CHEBI:30616"/>
        <dbReference type="ChEBI" id="CHEBI:33019"/>
        <dbReference type="ChEBI" id="CHEBI:57287"/>
        <dbReference type="ChEBI" id="CHEBI:57560"/>
        <dbReference type="ChEBI" id="CHEBI:83139"/>
        <dbReference type="ChEBI" id="CHEBI:456215"/>
        <dbReference type="EC" id="6.2.1.3"/>
    </reaction>
</comment>
<comment type="cofactor">
    <cofactor evidence="1">
        <name>Mg(2+)</name>
        <dbReference type="ChEBI" id="CHEBI:18420"/>
    </cofactor>
</comment>
<comment type="pathway">
    <text evidence="1">Lipid metabolism; fatty acid beta-oxidation.</text>
</comment>
<comment type="subcellular location">
    <subcellularLocation>
        <location evidence="2">Membrane</location>
        <topology evidence="2">Peripheral membrane protein</topology>
    </subcellularLocation>
    <text evidence="2">Partially membrane-associated.</text>
</comment>
<comment type="similarity">
    <text evidence="2">Belongs to the ATP-dependent AMP-binding enzyme family.</text>
</comment>
<feature type="chain" id="PRO_0000193128" description="Long-chain-fatty-acid--CoA ligase">
    <location>
        <begin position="1"/>
        <end position="561"/>
    </location>
</feature>
<feature type="binding site" evidence="2">
    <location>
        <begin position="213"/>
        <end position="224"/>
    </location>
    <ligand>
        <name>ATP</name>
        <dbReference type="ChEBI" id="CHEBI:30616"/>
    </ligand>
</feature>
<gene>
    <name type="primary">fadD</name>
    <name type="ordered locus">STY1948</name>
    <name type="ordered locus">t1059</name>
</gene>
<proteinExistence type="inferred from homology"/>
<protein>
    <recommendedName>
        <fullName>Long-chain-fatty-acid--CoA ligase</fullName>
        <ecNumber evidence="1">6.2.1.3</ecNumber>
    </recommendedName>
    <alternativeName>
        <fullName>Long-chain acyl-CoA synthetase</fullName>
    </alternativeName>
</protein>
<dbReference type="EC" id="6.2.1.3" evidence="1"/>
<dbReference type="EMBL" id="AL513382">
    <property type="protein sequence ID" value="CAD05501.1"/>
    <property type="molecule type" value="Genomic_DNA"/>
</dbReference>
<dbReference type="EMBL" id="AE014613">
    <property type="protein sequence ID" value="AAO68725.1"/>
    <property type="molecule type" value="Genomic_DNA"/>
</dbReference>
<dbReference type="RefSeq" id="NP_456325.1">
    <property type="nucleotide sequence ID" value="NC_003198.1"/>
</dbReference>
<dbReference type="RefSeq" id="WP_000758418.1">
    <property type="nucleotide sequence ID" value="NZ_WSUR01000004.1"/>
</dbReference>
<dbReference type="SMR" id="P63522"/>
<dbReference type="STRING" id="220341.gene:17585866"/>
<dbReference type="KEGG" id="stt:t1059"/>
<dbReference type="KEGG" id="sty:STY1948"/>
<dbReference type="PATRIC" id="fig|220341.7.peg.1965"/>
<dbReference type="eggNOG" id="COG0318">
    <property type="taxonomic scope" value="Bacteria"/>
</dbReference>
<dbReference type="HOGENOM" id="CLU_000022_59_7_6"/>
<dbReference type="OMA" id="ICCRGYN"/>
<dbReference type="OrthoDB" id="9803968at2"/>
<dbReference type="UniPathway" id="UPA00659"/>
<dbReference type="Proteomes" id="UP000000541">
    <property type="component" value="Chromosome"/>
</dbReference>
<dbReference type="Proteomes" id="UP000002670">
    <property type="component" value="Chromosome"/>
</dbReference>
<dbReference type="GO" id="GO:0016020">
    <property type="term" value="C:membrane"/>
    <property type="evidence" value="ECO:0007669"/>
    <property type="project" value="UniProtKB-SubCell"/>
</dbReference>
<dbReference type="GO" id="GO:0005524">
    <property type="term" value="F:ATP binding"/>
    <property type="evidence" value="ECO:0007669"/>
    <property type="project" value="UniProtKB-KW"/>
</dbReference>
<dbReference type="GO" id="GO:0004467">
    <property type="term" value="F:long-chain fatty acid-CoA ligase activity"/>
    <property type="evidence" value="ECO:0007669"/>
    <property type="project" value="UniProtKB-EC"/>
</dbReference>
<dbReference type="GO" id="GO:0006635">
    <property type="term" value="P:fatty acid beta-oxidation"/>
    <property type="evidence" value="ECO:0007669"/>
    <property type="project" value="UniProtKB-UniPathway"/>
</dbReference>
<dbReference type="CDD" id="cd05936">
    <property type="entry name" value="FC-FACS_FadD_like"/>
    <property type="match status" value="1"/>
</dbReference>
<dbReference type="FunFam" id="3.30.300.30:FF:000006">
    <property type="entry name" value="Long-chain-fatty-acid--CoA ligase FadD"/>
    <property type="match status" value="1"/>
</dbReference>
<dbReference type="FunFam" id="3.40.50.12780:FF:000003">
    <property type="entry name" value="Long-chain-fatty-acid--CoA ligase FadD"/>
    <property type="match status" value="1"/>
</dbReference>
<dbReference type="Gene3D" id="3.30.300.30">
    <property type="match status" value="1"/>
</dbReference>
<dbReference type="Gene3D" id="3.40.50.12780">
    <property type="entry name" value="N-terminal domain of ligase-like"/>
    <property type="match status" value="1"/>
</dbReference>
<dbReference type="InterPro" id="IPR025110">
    <property type="entry name" value="AMP-bd_C"/>
</dbReference>
<dbReference type="InterPro" id="IPR045851">
    <property type="entry name" value="AMP-bd_C_sf"/>
</dbReference>
<dbReference type="InterPro" id="IPR020845">
    <property type="entry name" value="AMP-binding_CS"/>
</dbReference>
<dbReference type="InterPro" id="IPR000873">
    <property type="entry name" value="AMP-dep_synth/lig_dom"/>
</dbReference>
<dbReference type="InterPro" id="IPR042099">
    <property type="entry name" value="ANL_N_sf"/>
</dbReference>
<dbReference type="InterPro" id="IPR050237">
    <property type="entry name" value="ATP-dep_AMP-bd_enzyme"/>
</dbReference>
<dbReference type="NCBIfam" id="NF006523">
    <property type="entry name" value="PRK08974.1"/>
    <property type="match status" value="1"/>
</dbReference>
<dbReference type="PANTHER" id="PTHR43767">
    <property type="entry name" value="LONG-CHAIN-FATTY-ACID--COA LIGASE"/>
    <property type="match status" value="1"/>
</dbReference>
<dbReference type="PANTHER" id="PTHR43767:SF8">
    <property type="entry name" value="LONG-CHAIN-FATTY-ACID--COA LIGASE"/>
    <property type="match status" value="1"/>
</dbReference>
<dbReference type="Pfam" id="PF00501">
    <property type="entry name" value="AMP-binding"/>
    <property type="match status" value="1"/>
</dbReference>
<dbReference type="Pfam" id="PF13193">
    <property type="entry name" value="AMP-binding_C"/>
    <property type="match status" value="1"/>
</dbReference>
<dbReference type="SUPFAM" id="SSF56801">
    <property type="entry name" value="Acetyl-CoA synthetase-like"/>
    <property type="match status" value="1"/>
</dbReference>
<dbReference type="PROSITE" id="PS00455">
    <property type="entry name" value="AMP_BINDING"/>
    <property type="match status" value="1"/>
</dbReference>
<keyword id="KW-0067">ATP-binding</keyword>
<keyword id="KW-0276">Fatty acid metabolism</keyword>
<keyword id="KW-0436">Ligase</keyword>
<keyword id="KW-0443">Lipid metabolism</keyword>
<keyword id="KW-0460">Magnesium</keyword>
<keyword id="KW-0472">Membrane</keyword>
<keyword id="KW-0547">Nucleotide-binding</keyword>
<name>LCFA_SALTI</name>
<evidence type="ECO:0000250" key="1">
    <source>
        <dbReference type="UniProtKB" id="P69451"/>
    </source>
</evidence>
<evidence type="ECO:0000305" key="2"/>
<reference key="1">
    <citation type="journal article" date="2001" name="Nature">
        <title>Complete genome sequence of a multiple drug resistant Salmonella enterica serovar Typhi CT18.</title>
        <authorList>
            <person name="Parkhill J."/>
            <person name="Dougan G."/>
            <person name="James K.D."/>
            <person name="Thomson N.R."/>
            <person name="Pickard D."/>
            <person name="Wain J."/>
            <person name="Churcher C.M."/>
            <person name="Mungall K.L."/>
            <person name="Bentley S.D."/>
            <person name="Holden M.T.G."/>
            <person name="Sebaihia M."/>
            <person name="Baker S."/>
            <person name="Basham D."/>
            <person name="Brooks K."/>
            <person name="Chillingworth T."/>
            <person name="Connerton P."/>
            <person name="Cronin A."/>
            <person name="Davis P."/>
            <person name="Davies R.M."/>
            <person name="Dowd L."/>
            <person name="White N."/>
            <person name="Farrar J."/>
            <person name="Feltwell T."/>
            <person name="Hamlin N."/>
            <person name="Haque A."/>
            <person name="Hien T.T."/>
            <person name="Holroyd S."/>
            <person name="Jagels K."/>
            <person name="Krogh A."/>
            <person name="Larsen T.S."/>
            <person name="Leather S."/>
            <person name="Moule S."/>
            <person name="O'Gaora P."/>
            <person name="Parry C."/>
            <person name="Quail M.A."/>
            <person name="Rutherford K.M."/>
            <person name="Simmonds M."/>
            <person name="Skelton J."/>
            <person name="Stevens K."/>
            <person name="Whitehead S."/>
            <person name="Barrell B.G."/>
        </authorList>
    </citation>
    <scope>NUCLEOTIDE SEQUENCE [LARGE SCALE GENOMIC DNA]</scope>
    <source>
        <strain>CT18</strain>
    </source>
</reference>
<reference key="2">
    <citation type="journal article" date="2003" name="J. Bacteriol.">
        <title>Comparative genomics of Salmonella enterica serovar Typhi strains Ty2 and CT18.</title>
        <authorList>
            <person name="Deng W."/>
            <person name="Liou S.-R."/>
            <person name="Plunkett G. III"/>
            <person name="Mayhew G.F."/>
            <person name="Rose D.J."/>
            <person name="Burland V."/>
            <person name="Kodoyianni V."/>
            <person name="Schwartz D.C."/>
            <person name="Blattner F.R."/>
        </authorList>
    </citation>
    <scope>NUCLEOTIDE SEQUENCE [LARGE SCALE GENOMIC DNA]</scope>
    <source>
        <strain>ATCC 700931 / Ty2</strain>
    </source>
</reference>
<accession>P63522</accession>
<accession>Q8XGG8</accession>
<sequence>MKKVWLNRYPADVPAEINPDRYQSLVELFEHAATRYADQPAFVNMGEVMTFRKLEERSRAFAAYLQQGLGLKKGDRVALMMPNLLQYPVALFGILRAGMIVVNVNPLYTPRELEHQLNDSGAAAIIIVSNFAHTLEKVVEKTSVQHVILTRMGDQLSTAKGTVVNFVVKYIKRLVPKYHLPDAISFRSALQHGYRMQYVKPEVVAEDLAFLQYTGGTTGVAKGAMLTHRNMLANLEQVKATYGPLLHPGKELVVTALPLYHIFALTMNCLLFIELGGQNLLITNPRDIPGLVKELAKYPFTAMTGVNTLFNALLNNKEFQQLDFSSLHLSAGGGMPVQNVVAERWVKLTGQYLLEGYGLTECAPLVSVNPHDIDYHSGSIGLPVPSTEAKLVDDDDNEVAPGEAGELCVKGPQVMLGYWQRPDATDEIIKDGWLHTGDIAVMDEDGFLRIVDRKKDMILVSGFNVYPNEIEDVVMQHSGVQEVAAVGVPSGSSGEAVKLFVVKKDPALTDDALITFCRRHLTGYKVPKQVEFREELPKSNVGKILRRELRDEARGKVDNKA</sequence>